<gene>
    <name evidence="1" type="primary">sthA</name>
    <name evidence="1" type="synonym">udhA</name>
    <name type="ordered locus">EcE24377A_4502</name>
</gene>
<reference key="1">
    <citation type="journal article" date="2008" name="J. Bacteriol.">
        <title>The pangenome structure of Escherichia coli: comparative genomic analysis of E. coli commensal and pathogenic isolates.</title>
        <authorList>
            <person name="Rasko D.A."/>
            <person name="Rosovitz M.J."/>
            <person name="Myers G.S.A."/>
            <person name="Mongodin E.F."/>
            <person name="Fricke W.F."/>
            <person name="Gajer P."/>
            <person name="Crabtree J."/>
            <person name="Sebaihia M."/>
            <person name="Thomson N.R."/>
            <person name="Chaudhuri R."/>
            <person name="Henderson I.R."/>
            <person name="Sperandio V."/>
            <person name="Ravel J."/>
        </authorList>
    </citation>
    <scope>NUCLEOTIDE SEQUENCE [LARGE SCALE GENOMIC DNA]</scope>
    <source>
        <strain>E24377A / ETEC</strain>
    </source>
</reference>
<accession>A7ZUI2</accession>
<keyword id="KW-0963">Cytoplasm</keyword>
<keyword id="KW-0274">FAD</keyword>
<keyword id="KW-0285">Flavoprotein</keyword>
<keyword id="KW-0520">NAD</keyword>
<keyword id="KW-0521">NADP</keyword>
<keyword id="KW-0560">Oxidoreductase</keyword>
<keyword id="KW-1185">Reference proteome</keyword>
<comment type="function">
    <text evidence="1">Conversion of NADPH, generated by peripheral catabolic pathways, to NADH, which can enter the respiratory chain for energy generation.</text>
</comment>
<comment type="catalytic activity">
    <reaction evidence="1">
        <text>NAD(+) + NADPH = NADH + NADP(+)</text>
        <dbReference type="Rhea" id="RHEA:11692"/>
        <dbReference type="ChEBI" id="CHEBI:57540"/>
        <dbReference type="ChEBI" id="CHEBI:57783"/>
        <dbReference type="ChEBI" id="CHEBI:57945"/>
        <dbReference type="ChEBI" id="CHEBI:58349"/>
        <dbReference type="EC" id="1.6.1.1"/>
    </reaction>
</comment>
<comment type="cofactor">
    <cofactor evidence="1">
        <name>FAD</name>
        <dbReference type="ChEBI" id="CHEBI:57692"/>
    </cofactor>
    <text evidence="1">Binds 1 FAD per subunit.</text>
</comment>
<comment type="subcellular location">
    <subcellularLocation>
        <location evidence="1">Cytoplasm</location>
    </subcellularLocation>
</comment>
<comment type="similarity">
    <text evidence="1">Belongs to the class-I pyridine nucleotide-disulfide oxidoreductase family.</text>
</comment>
<evidence type="ECO:0000255" key="1">
    <source>
        <dbReference type="HAMAP-Rule" id="MF_00247"/>
    </source>
</evidence>
<organism>
    <name type="scientific">Escherichia coli O139:H28 (strain E24377A / ETEC)</name>
    <dbReference type="NCBI Taxonomy" id="331111"/>
    <lineage>
        <taxon>Bacteria</taxon>
        <taxon>Pseudomonadati</taxon>
        <taxon>Pseudomonadota</taxon>
        <taxon>Gammaproteobacteria</taxon>
        <taxon>Enterobacterales</taxon>
        <taxon>Enterobacteriaceae</taxon>
        <taxon>Escherichia</taxon>
    </lineage>
</organism>
<name>STHA_ECO24</name>
<dbReference type="EC" id="1.6.1.1" evidence="1"/>
<dbReference type="EMBL" id="CP000800">
    <property type="protein sequence ID" value="ABV20599.1"/>
    <property type="molecule type" value="Genomic_DNA"/>
</dbReference>
<dbReference type="RefSeq" id="WP_001120810.1">
    <property type="nucleotide sequence ID" value="NC_009801.1"/>
</dbReference>
<dbReference type="SMR" id="A7ZUI2"/>
<dbReference type="GeneID" id="75203206"/>
<dbReference type="KEGG" id="ecw:EcE24377A_4502"/>
<dbReference type="HOGENOM" id="CLU_016755_0_0_6"/>
<dbReference type="Proteomes" id="UP000001122">
    <property type="component" value="Chromosome"/>
</dbReference>
<dbReference type="GO" id="GO:0005829">
    <property type="term" value="C:cytosol"/>
    <property type="evidence" value="ECO:0007669"/>
    <property type="project" value="TreeGrafter"/>
</dbReference>
<dbReference type="GO" id="GO:0004148">
    <property type="term" value="F:dihydrolipoyl dehydrogenase (NADH) activity"/>
    <property type="evidence" value="ECO:0007669"/>
    <property type="project" value="TreeGrafter"/>
</dbReference>
<dbReference type="GO" id="GO:0050660">
    <property type="term" value="F:flavin adenine dinucleotide binding"/>
    <property type="evidence" value="ECO:0007669"/>
    <property type="project" value="TreeGrafter"/>
</dbReference>
<dbReference type="GO" id="GO:0003957">
    <property type="term" value="F:NAD(P)+ transhydrogenase (Si-specific) activity"/>
    <property type="evidence" value="ECO:0007669"/>
    <property type="project" value="UniProtKB-UniRule"/>
</dbReference>
<dbReference type="GO" id="GO:0006103">
    <property type="term" value="P:2-oxoglutarate metabolic process"/>
    <property type="evidence" value="ECO:0007669"/>
    <property type="project" value="TreeGrafter"/>
</dbReference>
<dbReference type="GO" id="GO:0006739">
    <property type="term" value="P:NADP metabolic process"/>
    <property type="evidence" value="ECO:0007669"/>
    <property type="project" value="UniProtKB-UniRule"/>
</dbReference>
<dbReference type="FunFam" id="3.30.390.30:FF:000002">
    <property type="entry name" value="Soluble pyridine nucleotide transhydrogenase"/>
    <property type="match status" value="1"/>
</dbReference>
<dbReference type="FunFam" id="3.50.50.60:FF:000008">
    <property type="entry name" value="Soluble pyridine nucleotide transhydrogenase"/>
    <property type="match status" value="1"/>
</dbReference>
<dbReference type="Gene3D" id="3.30.390.30">
    <property type="match status" value="1"/>
</dbReference>
<dbReference type="Gene3D" id="3.50.50.60">
    <property type="entry name" value="FAD/NAD(P)-binding domain"/>
    <property type="match status" value="2"/>
</dbReference>
<dbReference type="HAMAP" id="MF_00247">
    <property type="entry name" value="SthA"/>
    <property type="match status" value="1"/>
</dbReference>
<dbReference type="InterPro" id="IPR050151">
    <property type="entry name" value="Class-I_Pyr_Nuc-Dis_Oxidored"/>
</dbReference>
<dbReference type="InterPro" id="IPR036188">
    <property type="entry name" value="FAD/NAD-bd_sf"/>
</dbReference>
<dbReference type="InterPro" id="IPR023753">
    <property type="entry name" value="FAD/NAD-binding_dom"/>
</dbReference>
<dbReference type="InterPro" id="IPR016156">
    <property type="entry name" value="FAD/NAD-linked_Rdtase_dimer_sf"/>
</dbReference>
<dbReference type="InterPro" id="IPR001100">
    <property type="entry name" value="Pyr_nuc-diS_OxRdtase"/>
</dbReference>
<dbReference type="InterPro" id="IPR004099">
    <property type="entry name" value="Pyr_nucl-diS_OxRdtase_dimer"/>
</dbReference>
<dbReference type="InterPro" id="IPR022962">
    <property type="entry name" value="STH_gammaproteobact"/>
</dbReference>
<dbReference type="NCBIfam" id="NF003585">
    <property type="entry name" value="PRK05249.1"/>
    <property type="match status" value="1"/>
</dbReference>
<dbReference type="PANTHER" id="PTHR22912">
    <property type="entry name" value="DISULFIDE OXIDOREDUCTASE"/>
    <property type="match status" value="1"/>
</dbReference>
<dbReference type="PANTHER" id="PTHR22912:SF93">
    <property type="entry name" value="SOLUBLE PYRIDINE NUCLEOTIDE TRANSHYDROGENASE"/>
    <property type="match status" value="1"/>
</dbReference>
<dbReference type="Pfam" id="PF07992">
    <property type="entry name" value="Pyr_redox_2"/>
    <property type="match status" value="1"/>
</dbReference>
<dbReference type="Pfam" id="PF02852">
    <property type="entry name" value="Pyr_redox_dim"/>
    <property type="match status" value="1"/>
</dbReference>
<dbReference type="PIRSF" id="PIRSF000350">
    <property type="entry name" value="Mercury_reductase_MerA"/>
    <property type="match status" value="1"/>
</dbReference>
<dbReference type="PRINTS" id="PR00368">
    <property type="entry name" value="FADPNR"/>
</dbReference>
<dbReference type="PRINTS" id="PR00411">
    <property type="entry name" value="PNDRDTASEI"/>
</dbReference>
<dbReference type="SUPFAM" id="SSF51905">
    <property type="entry name" value="FAD/NAD(P)-binding domain"/>
    <property type="match status" value="1"/>
</dbReference>
<dbReference type="SUPFAM" id="SSF55424">
    <property type="entry name" value="FAD/NAD-linked reductases, dimerisation (C-terminal) domain"/>
    <property type="match status" value="1"/>
</dbReference>
<protein>
    <recommendedName>
        <fullName evidence="1">Soluble pyridine nucleotide transhydrogenase</fullName>
        <shortName evidence="1">STH</shortName>
        <ecNumber evidence="1">1.6.1.1</ecNumber>
    </recommendedName>
    <alternativeName>
        <fullName evidence="1">NAD(P)(+) transhydrogenase [B-specific]</fullName>
    </alternativeName>
</protein>
<proteinExistence type="inferred from homology"/>
<feature type="chain" id="PRO_1000059008" description="Soluble pyridine nucleotide transhydrogenase">
    <location>
        <begin position="1"/>
        <end position="466"/>
    </location>
</feature>
<feature type="binding site" evidence="1">
    <location>
        <begin position="36"/>
        <end position="45"/>
    </location>
    <ligand>
        <name>FAD</name>
        <dbReference type="ChEBI" id="CHEBI:57692"/>
    </ligand>
</feature>
<sequence>MPHSYDYDAIVIGSGPGGEGAAMGLVKQGARVAVIERYQNVGGGCTHWGTIPSKALRHAVSRIIEFNQNPLYSDHSRLLRSSFADILNHADNVINQQTRMRQGFYERNHCEILQGNARFVDEHTLALDCPDGSVETLTAEKFVIACGSRPYHPTDVDFTHPRIYDSDSILSMHHEPRHVLIYGAGVIGCEYASIFRGMDVKVDLINTRDRLLAFLDQEMSDSLSYHFWNSGVVIRHNEEYEKIEGCDDGVIMHLKSGKKLKADCLLYANGRTGNTDSLALQNIGLETDSRGQLKVNSMYQTAQPHVYAVGDVIGYPSLASAAYDQGRIAAQALVKGEATAHLIEDIPTGIYTIPEISSVGKTEQQLTAMKVPYEVGRAQFKHLARAQIVGMNVGTLKILFHRETKEILGIHCFGERAAEIIHIGQAIMEQKGGGNTIEYFVNTTFNYPTMAEAYRVAALNGLNRLF</sequence>